<reference key="1">
    <citation type="journal article" date="2009" name="PLoS Genet.">
        <title>Organised genome dynamics in the Escherichia coli species results in highly diverse adaptive paths.</title>
        <authorList>
            <person name="Touchon M."/>
            <person name="Hoede C."/>
            <person name="Tenaillon O."/>
            <person name="Barbe V."/>
            <person name="Baeriswyl S."/>
            <person name="Bidet P."/>
            <person name="Bingen E."/>
            <person name="Bonacorsi S."/>
            <person name="Bouchier C."/>
            <person name="Bouvet O."/>
            <person name="Calteau A."/>
            <person name="Chiapello H."/>
            <person name="Clermont O."/>
            <person name="Cruveiller S."/>
            <person name="Danchin A."/>
            <person name="Diard M."/>
            <person name="Dossat C."/>
            <person name="Karoui M.E."/>
            <person name="Frapy E."/>
            <person name="Garry L."/>
            <person name="Ghigo J.M."/>
            <person name="Gilles A.M."/>
            <person name="Johnson J."/>
            <person name="Le Bouguenec C."/>
            <person name="Lescat M."/>
            <person name="Mangenot S."/>
            <person name="Martinez-Jehanne V."/>
            <person name="Matic I."/>
            <person name="Nassif X."/>
            <person name="Oztas S."/>
            <person name="Petit M.A."/>
            <person name="Pichon C."/>
            <person name="Rouy Z."/>
            <person name="Ruf C.S."/>
            <person name="Schneider D."/>
            <person name="Tourret J."/>
            <person name="Vacherie B."/>
            <person name="Vallenet D."/>
            <person name="Medigue C."/>
            <person name="Rocha E.P.C."/>
            <person name="Denamur E."/>
        </authorList>
    </citation>
    <scope>NUCLEOTIDE SEQUENCE [LARGE SCALE GENOMIC DNA]</scope>
    <source>
        <strain>S88 / ExPEC</strain>
    </source>
</reference>
<evidence type="ECO:0000255" key="1">
    <source>
        <dbReference type="HAMAP-Rule" id="MF_01365"/>
    </source>
</evidence>
<evidence type="ECO:0000305" key="2"/>
<accession>B7MCS0</accession>
<sequence length="177" mass="18904">MSRVAKAPVVVPAGVDVKINGQVITIKGKNGELTRTLNDAVEVKHADNTLTFGPRDGYADGWAQAGTARALLNSMVIGVTEGFTKKLQLVGVGYRAAVKGNVINLSLGFSHPVDHQLPAGITAECPTQTEIVLKGADKQVIGQVAADLRAYRRPEPYKGKGVRYADEVVRTKEAKKK</sequence>
<feature type="chain" id="PRO_1000143981" description="Large ribosomal subunit protein uL6">
    <location>
        <begin position="1"/>
        <end position="177"/>
    </location>
</feature>
<feature type="modified residue" description="N6-acetyllysine" evidence="1">
    <location>
        <position position="44"/>
    </location>
</feature>
<name>RL6_ECO45</name>
<gene>
    <name evidence="1" type="primary">rplF</name>
    <name type="ordered locus">ECS88_3692</name>
</gene>
<organism>
    <name type="scientific">Escherichia coli O45:K1 (strain S88 / ExPEC)</name>
    <dbReference type="NCBI Taxonomy" id="585035"/>
    <lineage>
        <taxon>Bacteria</taxon>
        <taxon>Pseudomonadati</taxon>
        <taxon>Pseudomonadota</taxon>
        <taxon>Gammaproteobacteria</taxon>
        <taxon>Enterobacterales</taxon>
        <taxon>Enterobacteriaceae</taxon>
        <taxon>Escherichia</taxon>
    </lineage>
</organism>
<dbReference type="EMBL" id="CU928161">
    <property type="protein sequence ID" value="CAR04909.1"/>
    <property type="molecule type" value="Genomic_DNA"/>
</dbReference>
<dbReference type="RefSeq" id="WP_000091945.1">
    <property type="nucleotide sequence ID" value="NC_011742.1"/>
</dbReference>
<dbReference type="EMDB" id="EMD-7970"/>
<dbReference type="EMDB" id="EMD-8826"/>
<dbReference type="EMDB" id="EMD-8829"/>
<dbReference type="SMR" id="B7MCS0"/>
<dbReference type="IntAct" id="B7MCS0">
    <property type="interactions" value="1"/>
</dbReference>
<dbReference type="GeneID" id="86948169"/>
<dbReference type="KEGG" id="ecz:ECS88_3692"/>
<dbReference type="HOGENOM" id="CLU_065464_1_2_6"/>
<dbReference type="Proteomes" id="UP000000747">
    <property type="component" value="Chromosome"/>
</dbReference>
<dbReference type="GO" id="GO:0022625">
    <property type="term" value="C:cytosolic large ribosomal subunit"/>
    <property type="evidence" value="ECO:0007669"/>
    <property type="project" value="TreeGrafter"/>
</dbReference>
<dbReference type="GO" id="GO:0019843">
    <property type="term" value="F:rRNA binding"/>
    <property type="evidence" value="ECO:0007669"/>
    <property type="project" value="UniProtKB-UniRule"/>
</dbReference>
<dbReference type="GO" id="GO:0003735">
    <property type="term" value="F:structural constituent of ribosome"/>
    <property type="evidence" value="ECO:0007669"/>
    <property type="project" value="InterPro"/>
</dbReference>
<dbReference type="GO" id="GO:0002181">
    <property type="term" value="P:cytoplasmic translation"/>
    <property type="evidence" value="ECO:0007669"/>
    <property type="project" value="TreeGrafter"/>
</dbReference>
<dbReference type="FunFam" id="3.90.930.12:FF:000001">
    <property type="entry name" value="50S ribosomal protein L6"/>
    <property type="match status" value="1"/>
</dbReference>
<dbReference type="FunFam" id="3.90.930.12:FF:000002">
    <property type="entry name" value="50S ribosomal protein L6"/>
    <property type="match status" value="1"/>
</dbReference>
<dbReference type="Gene3D" id="3.90.930.12">
    <property type="entry name" value="Ribosomal protein L6, alpha-beta domain"/>
    <property type="match status" value="2"/>
</dbReference>
<dbReference type="HAMAP" id="MF_01365_B">
    <property type="entry name" value="Ribosomal_uL6_B"/>
    <property type="match status" value="1"/>
</dbReference>
<dbReference type="InterPro" id="IPR000702">
    <property type="entry name" value="Ribosomal_uL6-like"/>
</dbReference>
<dbReference type="InterPro" id="IPR036789">
    <property type="entry name" value="Ribosomal_uL6-like_a/b-dom_sf"/>
</dbReference>
<dbReference type="InterPro" id="IPR020040">
    <property type="entry name" value="Ribosomal_uL6_a/b-dom"/>
</dbReference>
<dbReference type="InterPro" id="IPR019906">
    <property type="entry name" value="Ribosomal_uL6_bac-type"/>
</dbReference>
<dbReference type="InterPro" id="IPR002358">
    <property type="entry name" value="Ribosomal_uL6_CS"/>
</dbReference>
<dbReference type="NCBIfam" id="TIGR03654">
    <property type="entry name" value="L6_bact"/>
    <property type="match status" value="1"/>
</dbReference>
<dbReference type="PANTHER" id="PTHR11655">
    <property type="entry name" value="60S/50S RIBOSOMAL PROTEIN L6/L9"/>
    <property type="match status" value="1"/>
</dbReference>
<dbReference type="PANTHER" id="PTHR11655:SF14">
    <property type="entry name" value="LARGE RIBOSOMAL SUBUNIT PROTEIN UL6M"/>
    <property type="match status" value="1"/>
</dbReference>
<dbReference type="Pfam" id="PF00347">
    <property type="entry name" value="Ribosomal_L6"/>
    <property type="match status" value="2"/>
</dbReference>
<dbReference type="PIRSF" id="PIRSF002162">
    <property type="entry name" value="Ribosomal_L6"/>
    <property type="match status" value="1"/>
</dbReference>
<dbReference type="PRINTS" id="PR00059">
    <property type="entry name" value="RIBOSOMALL6"/>
</dbReference>
<dbReference type="SUPFAM" id="SSF56053">
    <property type="entry name" value="Ribosomal protein L6"/>
    <property type="match status" value="2"/>
</dbReference>
<dbReference type="PROSITE" id="PS00525">
    <property type="entry name" value="RIBOSOMAL_L6_1"/>
    <property type="match status" value="1"/>
</dbReference>
<protein>
    <recommendedName>
        <fullName evidence="1">Large ribosomal subunit protein uL6</fullName>
    </recommendedName>
    <alternativeName>
        <fullName evidence="2">50S ribosomal protein L6</fullName>
    </alternativeName>
</protein>
<keyword id="KW-0007">Acetylation</keyword>
<keyword id="KW-1185">Reference proteome</keyword>
<keyword id="KW-0687">Ribonucleoprotein</keyword>
<keyword id="KW-0689">Ribosomal protein</keyword>
<keyword id="KW-0694">RNA-binding</keyword>
<keyword id="KW-0699">rRNA-binding</keyword>
<comment type="function">
    <text evidence="1">This protein binds to the 23S rRNA, and is important in its secondary structure. It is located near the subunit interface in the base of the L7/L12 stalk, and near the tRNA binding site of the peptidyltransferase center.</text>
</comment>
<comment type="subunit">
    <text evidence="1">Part of the 50S ribosomal subunit.</text>
</comment>
<comment type="similarity">
    <text evidence="1">Belongs to the universal ribosomal protein uL6 family.</text>
</comment>
<proteinExistence type="inferred from homology"/>